<sequence>MANERPAQQSDIKLLISKGLEQGYLTYAEVNDHLPDDLVDPEQIEDIISMINGMGIDVHEVAPDAETLLLNDGNTGNREVDDTAAEEAAAALTALDTEGGRTTDPVRMYMREMGTVELLTREGEIAIAKRIEEGLSQVQAALGVFPLSTEMLLADYEAHKEGKKRLAEIVVGFNDLIEEADAAAAALAAAGPVAVSDDEAVDEDDDEDGDDEAAEEEAGPTGPDPVEVATRMENLANEYAKFKKVYAKNGAEHKLVVKAREDMAAIFTTLKLPLPLTDALVTQLRGVVNGIKDHERKVLHLATTVARMPRKDFIRSWEGNQTNLEWVEDALKRKQKWSSALRDVKDQIISEQQGSIEMEKANYLTLGEIKEISRAMAYGEAKARKAKKEMVEANLRLVISIAKKYTNRGLQFLDLIQEGNIGLMKAVDKFEYRRGYKFSTYATWWIRQAITRSIADQARTIRIPVHMIETINKLNRISRQMLQQFGREATPEELAKEMDMPEDKIRKVMKIAKEPISMETPIGDDEDSHLGDFIEDTNVESPIDNTTNINLSETVRDVLAGLTPREAKVLRMRFGIDMNTDHTLEEVGKQFDVTRERIRQIEAKALRKLRHPSRSEQLRSFLDID</sequence>
<gene>
    <name evidence="1" type="primary">rpoD</name>
    <name type="ordered locus">XAC3788</name>
</gene>
<reference key="1">
    <citation type="journal article" date="2002" name="Nature">
        <title>Comparison of the genomes of two Xanthomonas pathogens with differing host specificities.</title>
        <authorList>
            <person name="da Silva A.C.R."/>
            <person name="Ferro J.A."/>
            <person name="Reinach F.C."/>
            <person name="Farah C.S."/>
            <person name="Furlan L.R."/>
            <person name="Quaggio R.B."/>
            <person name="Monteiro-Vitorello C.B."/>
            <person name="Van Sluys M.A."/>
            <person name="Almeida N.F. Jr."/>
            <person name="Alves L.M.C."/>
            <person name="do Amaral A.M."/>
            <person name="Bertolini M.C."/>
            <person name="Camargo L.E.A."/>
            <person name="Camarotte G."/>
            <person name="Cannavan F."/>
            <person name="Cardozo J."/>
            <person name="Chambergo F."/>
            <person name="Ciapina L.P."/>
            <person name="Cicarelli R.M.B."/>
            <person name="Coutinho L.L."/>
            <person name="Cursino-Santos J.R."/>
            <person name="El-Dorry H."/>
            <person name="Faria J.B."/>
            <person name="Ferreira A.J.S."/>
            <person name="Ferreira R.C.C."/>
            <person name="Ferro M.I.T."/>
            <person name="Formighieri E.F."/>
            <person name="Franco M.C."/>
            <person name="Greggio C.C."/>
            <person name="Gruber A."/>
            <person name="Katsuyama A.M."/>
            <person name="Kishi L.T."/>
            <person name="Leite R.P."/>
            <person name="Lemos E.G.M."/>
            <person name="Lemos M.V.F."/>
            <person name="Locali E.C."/>
            <person name="Machado M.A."/>
            <person name="Madeira A.M.B.N."/>
            <person name="Martinez-Rossi N.M."/>
            <person name="Martins E.C."/>
            <person name="Meidanis J."/>
            <person name="Menck C.F.M."/>
            <person name="Miyaki C.Y."/>
            <person name="Moon D.H."/>
            <person name="Moreira L.M."/>
            <person name="Novo M.T.M."/>
            <person name="Okura V.K."/>
            <person name="Oliveira M.C."/>
            <person name="Oliveira V.R."/>
            <person name="Pereira H.A."/>
            <person name="Rossi A."/>
            <person name="Sena J.A.D."/>
            <person name="Silva C."/>
            <person name="de Souza R.F."/>
            <person name="Spinola L.A.F."/>
            <person name="Takita M.A."/>
            <person name="Tamura R.E."/>
            <person name="Teixeira E.C."/>
            <person name="Tezza R.I.D."/>
            <person name="Trindade dos Santos M."/>
            <person name="Truffi D."/>
            <person name="Tsai S.M."/>
            <person name="White F.F."/>
            <person name="Setubal J.C."/>
            <person name="Kitajima J.P."/>
        </authorList>
    </citation>
    <scope>NUCLEOTIDE SEQUENCE [LARGE SCALE GENOMIC DNA]</scope>
    <source>
        <strain>306</strain>
    </source>
</reference>
<name>RPOD_XANAC</name>
<protein>
    <recommendedName>
        <fullName evidence="1">RNA polymerase sigma factor RpoD</fullName>
    </recommendedName>
    <alternativeName>
        <fullName evidence="1">Sigma-70</fullName>
    </alternativeName>
</protein>
<feature type="chain" id="PRO_0000093931" description="RNA polymerase sigma factor RpoD">
    <location>
        <begin position="1"/>
        <end position="625"/>
    </location>
</feature>
<feature type="DNA-binding region" description="H-T-H motif" evidence="1">
    <location>
        <begin position="584"/>
        <end position="603"/>
    </location>
</feature>
<feature type="region of interest" description="Disordered" evidence="2">
    <location>
        <begin position="194"/>
        <end position="226"/>
    </location>
</feature>
<feature type="region of interest" description="Sigma-70 factor domain-2" evidence="1">
    <location>
        <begin position="390"/>
        <end position="460"/>
    </location>
</feature>
<feature type="region of interest" description="Sigma-70 factor domain-3" evidence="1">
    <location>
        <begin position="469"/>
        <end position="545"/>
    </location>
</feature>
<feature type="region of interest" description="Sigma-70 factor domain-4" evidence="1">
    <location>
        <begin position="558"/>
        <end position="611"/>
    </location>
</feature>
<feature type="short sequence motif" description="Interaction with polymerase core subunit RpoC">
    <location>
        <begin position="414"/>
        <end position="417"/>
    </location>
</feature>
<feature type="compositionally biased region" description="Acidic residues" evidence="2">
    <location>
        <begin position="196"/>
        <end position="218"/>
    </location>
</feature>
<proteinExistence type="inferred from homology"/>
<evidence type="ECO:0000255" key="1">
    <source>
        <dbReference type="HAMAP-Rule" id="MF_00963"/>
    </source>
</evidence>
<evidence type="ECO:0000256" key="2">
    <source>
        <dbReference type="SAM" id="MobiDB-lite"/>
    </source>
</evidence>
<keyword id="KW-0963">Cytoplasm</keyword>
<keyword id="KW-0238">DNA-binding</keyword>
<keyword id="KW-0731">Sigma factor</keyword>
<keyword id="KW-0804">Transcription</keyword>
<keyword id="KW-0805">Transcription regulation</keyword>
<dbReference type="EMBL" id="AE008923">
    <property type="protein sequence ID" value="AAM38630.1"/>
    <property type="molecule type" value="Genomic_DNA"/>
</dbReference>
<dbReference type="RefSeq" id="WP_005921936.1">
    <property type="nucleotide sequence ID" value="NC_003919.1"/>
</dbReference>
<dbReference type="SMR" id="Q8PG33"/>
<dbReference type="GeneID" id="66912809"/>
<dbReference type="KEGG" id="xac:XAC3788"/>
<dbReference type="eggNOG" id="COG0568">
    <property type="taxonomic scope" value="Bacteria"/>
</dbReference>
<dbReference type="HOGENOM" id="CLU_014793_7_2_6"/>
<dbReference type="Proteomes" id="UP000000576">
    <property type="component" value="Chromosome"/>
</dbReference>
<dbReference type="GO" id="GO:0005737">
    <property type="term" value="C:cytoplasm"/>
    <property type="evidence" value="ECO:0007669"/>
    <property type="project" value="UniProtKB-SubCell"/>
</dbReference>
<dbReference type="GO" id="GO:0003677">
    <property type="term" value="F:DNA binding"/>
    <property type="evidence" value="ECO:0007669"/>
    <property type="project" value="UniProtKB-UniRule"/>
</dbReference>
<dbReference type="GO" id="GO:0016987">
    <property type="term" value="F:sigma factor activity"/>
    <property type="evidence" value="ECO:0007669"/>
    <property type="project" value="UniProtKB-UniRule"/>
</dbReference>
<dbReference type="GO" id="GO:0006352">
    <property type="term" value="P:DNA-templated transcription initiation"/>
    <property type="evidence" value="ECO:0007669"/>
    <property type="project" value="UniProtKB-UniRule"/>
</dbReference>
<dbReference type="CDD" id="cd06171">
    <property type="entry name" value="Sigma70_r4"/>
    <property type="match status" value="1"/>
</dbReference>
<dbReference type="FunFam" id="1.10.220.120:FF:000001">
    <property type="entry name" value="RNA polymerase sigma factor RpoD"/>
    <property type="match status" value="1"/>
</dbReference>
<dbReference type="FunFam" id="1.10.601.10:FF:000002">
    <property type="entry name" value="RNA polymerase sigma factor RpoD"/>
    <property type="match status" value="1"/>
</dbReference>
<dbReference type="FunFam" id="1.10.10.10:FF:000002">
    <property type="entry name" value="RNA polymerase sigma factor SigA"/>
    <property type="match status" value="1"/>
</dbReference>
<dbReference type="FunFam" id="1.10.10.10:FF:000004">
    <property type="entry name" value="RNA polymerase sigma factor SigA"/>
    <property type="match status" value="1"/>
</dbReference>
<dbReference type="Gene3D" id="1.10.601.10">
    <property type="entry name" value="RNA Polymerase Primary Sigma Factor"/>
    <property type="match status" value="1"/>
</dbReference>
<dbReference type="Gene3D" id="1.10.220.120">
    <property type="entry name" value="Sigma-70 factor, region 1.1"/>
    <property type="match status" value="1"/>
</dbReference>
<dbReference type="Gene3D" id="1.10.10.10">
    <property type="entry name" value="Winged helix-like DNA-binding domain superfamily/Winged helix DNA-binding domain"/>
    <property type="match status" value="2"/>
</dbReference>
<dbReference type="HAMAP" id="MF_00963">
    <property type="entry name" value="Sigma70_RpoD_SigA"/>
    <property type="match status" value="1"/>
</dbReference>
<dbReference type="InterPro" id="IPR014284">
    <property type="entry name" value="RNA_pol_sigma-70_dom"/>
</dbReference>
<dbReference type="InterPro" id="IPR000943">
    <property type="entry name" value="RNA_pol_sigma70"/>
</dbReference>
<dbReference type="InterPro" id="IPR009042">
    <property type="entry name" value="RNA_pol_sigma70_r1_2"/>
</dbReference>
<dbReference type="InterPro" id="IPR007627">
    <property type="entry name" value="RNA_pol_sigma70_r2"/>
</dbReference>
<dbReference type="InterPro" id="IPR007624">
    <property type="entry name" value="RNA_pol_sigma70_r3"/>
</dbReference>
<dbReference type="InterPro" id="IPR007630">
    <property type="entry name" value="RNA_pol_sigma70_r4"/>
</dbReference>
<dbReference type="InterPro" id="IPR007631">
    <property type="entry name" value="RNA_pol_sigma_70_non-ess"/>
</dbReference>
<dbReference type="InterPro" id="IPR007127">
    <property type="entry name" value="RNA_pol_sigma_70_r1_1"/>
</dbReference>
<dbReference type="InterPro" id="IPR042189">
    <property type="entry name" value="RNA_pol_sigma_70_r1_1_sf"/>
</dbReference>
<dbReference type="InterPro" id="IPR013325">
    <property type="entry name" value="RNA_pol_sigma_r2"/>
</dbReference>
<dbReference type="InterPro" id="IPR013324">
    <property type="entry name" value="RNA_pol_sigma_r3/r4-like"/>
</dbReference>
<dbReference type="InterPro" id="IPR012760">
    <property type="entry name" value="RNA_pol_sigma_RpoD_C"/>
</dbReference>
<dbReference type="InterPro" id="IPR050239">
    <property type="entry name" value="Sigma-70_RNA_pol_init_factors"/>
</dbReference>
<dbReference type="InterPro" id="IPR028630">
    <property type="entry name" value="Sigma70_RpoD"/>
</dbReference>
<dbReference type="InterPro" id="IPR036388">
    <property type="entry name" value="WH-like_DNA-bd_sf"/>
</dbReference>
<dbReference type="NCBIfam" id="NF004208">
    <property type="entry name" value="PRK05658.1"/>
    <property type="match status" value="1"/>
</dbReference>
<dbReference type="NCBIfam" id="TIGR02393">
    <property type="entry name" value="RpoD_Cterm"/>
    <property type="match status" value="1"/>
</dbReference>
<dbReference type="NCBIfam" id="TIGR02937">
    <property type="entry name" value="sigma70-ECF"/>
    <property type="match status" value="1"/>
</dbReference>
<dbReference type="PANTHER" id="PTHR30603">
    <property type="entry name" value="RNA POLYMERASE SIGMA FACTOR RPO"/>
    <property type="match status" value="1"/>
</dbReference>
<dbReference type="PANTHER" id="PTHR30603:SF60">
    <property type="entry name" value="RNA POLYMERASE SIGMA FACTOR RPOD"/>
    <property type="match status" value="1"/>
</dbReference>
<dbReference type="Pfam" id="PF04546">
    <property type="entry name" value="Sigma70_ner"/>
    <property type="match status" value="1"/>
</dbReference>
<dbReference type="Pfam" id="PF03979">
    <property type="entry name" value="Sigma70_r1_1"/>
    <property type="match status" value="1"/>
</dbReference>
<dbReference type="Pfam" id="PF00140">
    <property type="entry name" value="Sigma70_r1_2"/>
    <property type="match status" value="1"/>
</dbReference>
<dbReference type="Pfam" id="PF04542">
    <property type="entry name" value="Sigma70_r2"/>
    <property type="match status" value="1"/>
</dbReference>
<dbReference type="Pfam" id="PF04539">
    <property type="entry name" value="Sigma70_r3"/>
    <property type="match status" value="1"/>
</dbReference>
<dbReference type="Pfam" id="PF04545">
    <property type="entry name" value="Sigma70_r4"/>
    <property type="match status" value="1"/>
</dbReference>
<dbReference type="PRINTS" id="PR00046">
    <property type="entry name" value="SIGMA70FCT"/>
</dbReference>
<dbReference type="SUPFAM" id="SSF88946">
    <property type="entry name" value="Sigma2 domain of RNA polymerase sigma factors"/>
    <property type="match status" value="1"/>
</dbReference>
<dbReference type="SUPFAM" id="SSF88659">
    <property type="entry name" value="Sigma3 and sigma4 domains of RNA polymerase sigma factors"/>
    <property type="match status" value="2"/>
</dbReference>
<dbReference type="PROSITE" id="PS00715">
    <property type="entry name" value="SIGMA70_1"/>
    <property type="match status" value="1"/>
</dbReference>
<dbReference type="PROSITE" id="PS00716">
    <property type="entry name" value="SIGMA70_2"/>
    <property type="match status" value="1"/>
</dbReference>
<organism>
    <name type="scientific">Xanthomonas axonopodis pv. citri (strain 306)</name>
    <dbReference type="NCBI Taxonomy" id="190486"/>
    <lineage>
        <taxon>Bacteria</taxon>
        <taxon>Pseudomonadati</taxon>
        <taxon>Pseudomonadota</taxon>
        <taxon>Gammaproteobacteria</taxon>
        <taxon>Lysobacterales</taxon>
        <taxon>Lysobacteraceae</taxon>
        <taxon>Xanthomonas</taxon>
    </lineage>
</organism>
<accession>Q8PG33</accession>
<comment type="function">
    <text evidence="1">Sigma factors are initiation factors that promote the attachment of RNA polymerase to specific initiation sites and are then released. This sigma factor is the primary sigma factor during exponential growth.</text>
</comment>
<comment type="subunit">
    <text evidence="1">Interacts transiently with the RNA polymerase catalytic core.</text>
</comment>
<comment type="subcellular location">
    <subcellularLocation>
        <location evidence="1">Cytoplasm</location>
    </subcellularLocation>
</comment>
<comment type="similarity">
    <text evidence="1">Belongs to the sigma-70 factor family. RpoD/SigA subfamily.</text>
</comment>